<comment type="catalytic activity">
    <reaction evidence="1">
        <text>tRNA(Lys) + L-lysine + ATP = L-lysyl-tRNA(Lys) + AMP + diphosphate</text>
        <dbReference type="Rhea" id="RHEA:20792"/>
        <dbReference type="Rhea" id="RHEA-COMP:9696"/>
        <dbReference type="Rhea" id="RHEA-COMP:9697"/>
        <dbReference type="ChEBI" id="CHEBI:30616"/>
        <dbReference type="ChEBI" id="CHEBI:32551"/>
        <dbReference type="ChEBI" id="CHEBI:33019"/>
        <dbReference type="ChEBI" id="CHEBI:78442"/>
        <dbReference type="ChEBI" id="CHEBI:78529"/>
        <dbReference type="ChEBI" id="CHEBI:456215"/>
        <dbReference type="EC" id="6.1.1.6"/>
    </reaction>
</comment>
<comment type="cofactor">
    <cofactor evidence="1">
        <name>Mg(2+)</name>
        <dbReference type="ChEBI" id="CHEBI:18420"/>
    </cofactor>
    <text evidence="1">Binds 3 Mg(2+) ions per subunit.</text>
</comment>
<comment type="subunit">
    <text evidence="1">Homodimer.</text>
</comment>
<comment type="subcellular location">
    <subcellularLocation>
        <location evidence="1">Cytoplasm</location>
    </subcellularLocation>
</comment>
<comment type="similarity">
    <text evidence="1">Belongs to the class-II aminoacyl-tRNA synthetase family.</text>
</comment>
<accession>A7MXL2</accession>
<evidence type="ECO:0000255" key="1">
    <source>
        <dbReference type="HAMAP-Rule" id="MF_00252"/>
    </source>
</evidence>
<proteinExistence type="inferred from homology"/>
<reference key="1">
    <citation type="submission" date="2007-08" db="EMBL/GenBank/DDBJ databases">
        <authorList>
            <consortium name="The Vibrio harveyi Genome Sequencing Project"/>
            <person name="Bassler B."/>
            <person name="Clifton S.W."/>
            <person name="Fulton L."/>
            <person name="Delehaunty K."/>
            <person name="Fronick C."/>
            <person name="Harrison M."/>
            <person name="Markivic C."/>
            <person name="Fulton R."/>
            <person name="Tin-Wollam A.-M."/>
            <person name="Shah N."/>
            <person name="Pepin K."/>
            <person name="Nash W."/>
            <person name="Thiruvilangam P."/>
            <person name="Bhonagiri V."/>
            <person name="Waters C."/>
            <person name="Tu K.C."/>
            <person name="Irgon J."/>
            <person name="Wilson R.K."/>
        </authorList>
    </citation>
    <scope>NUCLEOTIDE SEQUENCE [LARGE SCALE GENOMIC DNA]</scope>
    <source>
        <strain>ATCC BAA-1116 / BB120</strain>
    </source>
</reference>
<feature type="chain" id="PRO_1000012962" description="Lysine--tRNA ligase">
    <location>
        <begin position="1"/>
        <end position="510"/>
    </location>
</feature>
<feature type="binding site" evidence="1">
    <location>
        <position position="420"/>
    </location>
    <ligand>
        <name>Mg(2+)</name>
        <dbReference type="ChEBI" id="CHEBI:18420"/>
        <label>1</label>
    </ligand>
</feature>
<feature type="binding site" evidence="1">
    <location>
        <position position="427"/>
    </location>
    <ligand>
        <name>Mg(2+)</name>
        <dbReference type="ChEBI" id="CHEBI:18420"/>
        <label>1</label>
    </ligand>
</feature>
<feature type="binding site" evidence="1">
    <location>
        <position position="427"/>
    </location>
    <ligand>
        <name>Mg(2+)</name>
        <dbReference type="ChEBI" id="CHEBI:18420"/>
        <label>2</label>
    </ligand>
</feature>
<protein>
    <recommendedName>
        <fullName evidence="1">Lysine--tRNA ligase</fullName>
        <ecNumber evidence="1">6.1.1.6</ecNumber>
    </recommendedName>
    <alternativeName>
        <fullName evidence="1">Lysyl-tRNA synthetase</fullName>
        <shortName evidence="1">LysRS</shortName>
    </alternativeName>
</protein>
<name>SYK_VIBC1</name>
<organism>
    <name type="scientific">Vibrio campbellii (strain ATCC BAA-1116)</name>
    <dbReference type="NCBI Taxonomy" id="2902295"/>
    <lineage>
        <taxon>Bacteria</taxon>
        <taxon>Pseudomonadati</taxon>
        <taxon>Pseudomonadota</taxon>
        <taxon>Gammaproteobacteria</taxon>
        <taxon>Vibrionales</taxon>
        <taxon>Vibrionaceae</taxon>
        <taxon>Vibrio</taxon>
    </lineage>
</organism>
<keyword id="KW-0030">Aminoacyl-tRNA synthetase</keyword>
<keyword id="KW-0067">ATP-binding</keyword>
<keyword id="KW-0963">Cytoplasm</keyword>
<keyword id="KW-0436">Ligase</keyword>
<keyword id="KW-0460">Magnesium</keyword>
<keyword id="KW-0479">Metal-binding</keyword>
<keyword id="KW-0547">Nucleotide-binding</keyword>
<keyword id="KW-0648">Protein biosynthesis</keyword>
<gene>
    <name evidence="1" type="primary">lysS</name>
    <name type="ordered locus">VIBHAR_00960</name>
</gene>
<dbReference type="EC" id="6.1.1.6" evidence="1"/>
<dbReference type="EMBL" id="CP000789">
    <property type="protein sequence ID" value="ABU69959.1"/>
    <property type="molecule type" value="Genomic_DNA"/>
</dbReference>
<dbReference type="RefSeq" id="WP_012127032.1">
    <property type="nucleotide sequence ID" value="NC_009783.1"/>
</dbReference>
<dbReference type="SMR" id="A7MXL2"/>
<dbReference type="KEGG" id="vha:VIBHAR_00960"/>
<dbReference type="PATRIC" id="fig|338187.25.peg.1661"/>
<dbReference type="Proteomes" id="UP000008152">
    <property type="component" value="Chromosome I"/>
</dbReference>
<dbReference type="GO" id="GO:0005829">
    <property type="term" value="C:cytosol"/>
    <property type="evidence" value="ECO:0007669"/>
    <property type="project" value="TreeGrafter"/>
</dbReference>
<dbReference type="GO" id="GO:0005524">
    <property type="term" value="F:ATP binding"/>
    <property type="evidence" value="ECO:0007669"/>
    <property type="project" value="UniProtKB-UniRule"/>
</dbReference>
<dbReference type="GO" id="GO:0004824">
    <property type="term" value="F:lysine-tRNA ligase activity"/>
    <property type="evidence" value="ECO:0007669"/>
    <property type="project" value="UniProtKB-UniRule"/>
</dbReference>
<dbReference type="GO" id="GO:0000287">
    <property type="term" value="F:magnesium ion binding"/>
    <property type="evidence" value="ECO:0007669"/>
    <property type="project" value="UniProtKB-UniRule"/>
</dbReference>
<dbReference type="GO" id="GO:0000049">
    <property type="term" value="F:tRNA binding"/>
    <property type="evidence" value="ECO:0007669"/>
    <property type="project" value="TreeGrafter"/>
</dbReference>
<dbReference type="GO" id="GO:0006430">
    <property type="term" value="P:lysyl-tRNA aminoacylation"/>
    <property type="evidence" value="ECO:0007669"/>
    <property type="project" value="UniProtKB-UniRule"/>
</dbReference>
<dbReference type="CDD" id="cd00775">
    <property type="entry name" value="LysRS_core"/>
    <property type="match status" value="1"/>
</dbReference>
<dbReference type="CDD" id="cd04322">
    <property type="entry name" value="LysRS_N"/>
    <property type="match status" value="1"/>
</dbReference>
<dbReference type="FunFam" id="2.40.50.140:FF:000024">
    <property type="entry name" value="Lysine--tRNA ligase"/>
    <property type="match status" value="1"/>
</dbReference>
<dbReference type="FunFam" id="3.30.930.10:FF:000001">
    <property type="entry name" value="Lysine--tRNA ligase"/>
    <property type="match status" value="1"/>
</dbReference>
<dbReference type="Gene3D" id="3.30.930.10">
    <property type="entry name" value="Bira Bifunctional Protein, Domain 2"/>
    <property type="match status" value="1"/>
</dbReference>
<dbReference type="Gene3D" id="2.40.50.140">
    <property type="entry name" value="Nucleic acid-binding proteins"/>
    <property type="match status" value="1"/>
</dbReference>
<dbReference type="HAMAP" id="MF_00252">
    <property type="entry name" value="Lys_tRNA_synth_class2"/>
    <property type="match status" value="1"/>
</dbReference>
<dbReference type="InterPro" id="IPR004364">
    <property type="entry name" value="Aa-tRNA-synt_II"/>
</dbReference>
<dbReference type="InterPro" id="IPR006195">
    <property type="entry name" value="aa-tRNA-synth_II"/>
</dbReference>
<dbReference type="InterPro" id="IPR045864">
    <property type="entry name" value="aa-tRNA-synth_II/BPL/LPL"/>
</dbReference>
<dbReference type="InterPro" id="IPR002313">
    <property type="entry name" value="Lys-tRNA-ligase_II"/>
</dbReference>
<dbReference type="InterPro" id="IPR044136">
    <property type="entry name" value="Lys-tRNA-ligase_II_N"/>
</dbReference>
<dbReference type="InterPro" id="IPR018149">
    <property type="entry name" value="Lys-tRNA-synth_II_C"/>
</dbReference>
<dbReference type="InterPro" id="IPR012340">
    <property type="entry name" value="NA-bd_OB-fold"/>
</dbReference>
<dbReference type="InterPro" id="IPR004365">
    <property type="entry name" value="NA-bd_OB_tRNA"/>
</dbReference>
<dbReference type="NCBIfam" id="TIGR00499">
    <property type="entry name" value="lysS_bact"/>
    <property type="match status" value="1"/>
</dbReference>
<dbReference type="NCBIfam" id="NF001756">
    <property type="entry name" value="PRK00484.1"/>
    <property type="match status" value="1"/>
</dbReference>
<dbReference type="PANTHER" id="PTHR42918:SF15">
    <property type="entry name" value="LYSINE--TRNA LIGASE, CHLOROPLASTIC_MITOCHONDRIAL"/>
    <property type="match status" value="1"/>
</dbReference>
<dbReference type="PANTHER" id="PTHR42918">
    <property type="entry name" value="LYSYL-TRNA SYNTHETASE"/>
    <property type="match status" value="1"/>
</dbReference>
<dbReference type="Pfam" id="PF00152">
    <property type="entry name" value="tRNA-synt_2"/>
    <property type="match status" value="1"/>
</dbReference>
<dbReference type="Pfam" id="PF01336">
    <property type="entry name" value="tRNA_anti-codon"/>
    <property type="match status" value="1"/>
</dbReference>
<dbReference type="PRINTS" id="PR00982">
    <property type="entry name" value="TRNASYNTHLYS"/>
</dbReference>
<dbReference type="SUPFAM" id="SSF55681">
    <property type="entry name" value="Class II aaRS and biotin synthetases"/>
    <property type="match status" value="1"/>
</dbReference>
<dbReference type="SUPFAM" id="SSF50249">
    <property type="entry name" value="Nucleic acid-binding proteins"/>
    <property type="match status" value="1"/>
</dbReference>
<dbReference type="PROSITE" id="PS50862">
    <property type="entry name" value="AA_TRNA_LIGASE_II"/>
    <property type="match status" value="1"/>
</dbReference>
<sequence length="510" mass="57855">MTDAVQNETVQEASAQEENKLIAERRAKLDAIRKSCKANGHPNDFRRDALAGDLQKEFGEKTKEELEELNHVVAIAGRIMAKRGPFLVIQETSGRIQAYADKAVQKVLKEKYQGLDIGDIIGVKGALHKSGKGDLYVNMEEFELLTKALRPLPEKFHGLTDQEMRYRQRYVDLIVNEDSRQAFVVRSKVMSAIRNFMITKQFMEVETPMMHVIPGGASARPFITHHNALDMPMYLRIAPELYLKRLVVGGFDRVFEINRNFRNEGLSPRHNPEFTMMEFYMAYADYKELMDLTEELLSSVALEVLGSTSMPYGDDTVEFGGTYTRMSMFEAIKHYNPDHAQIQALTEEDIQNRDLMVSIAKSVHVEVESFWTCGQLLEEIFGETAEPKLMQPTFITGYPADISPLARRSDDNPFFTDRFEFFIGGREVANGFSELNDAEDQDARFKAQVEAKESGDDEAMFYDADYITALEHGLPPTAGQGIGIDRLVMLLTNTHTIRDVILFPAMRPQA</sequence>